<gene>
    <name evidence="1" type="primary">thiM</name>
    <name type="ordered locus">gbs0859</name>
</gene>
<keyword id="KW-0067">ATP-binding</keyword>
<keyword id="KW-0418">Kinase</keyword>
<keyword id="KW-0460">Magnesium</keyword>
<keyword id="KW-0479">Metal-binding</keyword>
<keyword id="KW-0547">Nucleotide-binding</keyword>
<keyword id="KW-0784">Thiamine biosynthesis</keyword>
<keyword id="KW-0808">Transferase</keyword>
<comment type="function">
    <text evidence="1">Catalyzes the phosphorylation of the hydroxyl group of 4-methyl-5-beta-hydroxyethylthiazole (THZ).</text>
</comment>
<comment type="catalytic activity">
    <reaction evidence="1">
        <text>5-(2-hydroxyethyl)-4-methylthiazole + ATP = 4-methyl-5-(2-phosphooxyethyl)-thiazole + ADP + H(+)</text>
        <dbReference type="Rhea" id="RHEA:24212"/>
        <dbReference type="ChEBI" id="CHEBI:15378"/>
        <dbReference type="ChEBI" id="CHEBI:17957"/>
        <dbReference type="ChEBI" id="CHEBI:30616"/>
        <dbReference type="ChEBI" id="CHEBI:58296"/>
        <dbReference type="ChEBI" id="CHEBI:456216"/>
        <dbReference type="EC" id="2.7.1.50"/>
    </reaction>
</comment>
<comment type="cofactor">
    <cofactor evidence="1">
        <name>Mg(2+)</name>
        <dbReference type="ChEBI" id="CHEBI:18420"/>
    </cofactor>
</comment>
<comment type="pathway">
    <text evidence="1">Cofactor biosynthesis; thiamine diphosphate biosynthesis; 4-methyl-5-(2-phosphoethyl)-thiazole from 5-(2-hydroxyethyl)-4-methylthiazole: step 1/1.</text>
</comment>
<comment type="similarity">
    <text evidence="1">Belongs to the Thz kinase family.</text>
</comment>
<name>THIM_STRA3</name>
<feature type="chain" id="PRO_0000156961" description="Hydroxyethylthiazole kinase">
    <location>
        <begin position="1"/>
        <end position="256"/>
    </location>
</feature>
<feature type="binding site" evidence="1">
    <location>
        <position position="38"/>
    </location>
    <ligand>
        <name>substrate</name>
    </ligand>
</feature>
<feature type="binding site" evidence="1">
    <location>
        <position position="114"/>
    </location>
    <ligand>
        <name>ATP</name>
        <dbReference type="ChEBI" id="CHEBI:30616"/>
    </ligand>
</feature>
<feature type="binding site" evidence="1">
    <location>
        <position position="159"/>
    </location>
    <ligand>
        <name>ATP</name>
        <dbReference type="ChEBI" id="CHEBI:30616"/>
    </ligand>
</feature>
<feature type="binding site" evidence="1">
    <location>
        <position position="186"/>
    </location>
    <ligand>
        <name>substrate</name>
    </ligand>
</feature>
<accession>Q8E5X0</accession>
<protein>
    <recommendedName>
        <fullName evidence="1">Hydroxyethylthiazole kinase</fullName>
        <ecNumber evidence="1">2.7.1.50</ecNumber>
    </recommendedName>
    <alternativeName>
        <fullName evidence="1">4-methyl-5-beta-hydroxyethylthiazole kinase</fullName>
        <shortName evidence="1">TH kinase</shortName>
        <shortName evidence="1">Thz kinase</shortName>
    </alternativeName>
</protein>
<evidence type="ECO:0000255" key="1">
    <source>
        <dbReference type="HAMAP-Rule" id="MF_00228"/>
    </source>
</evidence>
<proteinExistence type="inferred from homology"/>
<dbReference type="EC" id="2.7.1.50" evidence="1"/>
<dbReference type="EMBL" id="AL766847">
    <property type="protein sequence ID" value="CAD46503.1"/>
    <property type="molecule type" value="Genomic_DNA"/>
</dbReference>
<dbReference type="RefSeq" id="WP_000280427.1">
    <property type="nucleotide sequence ID" value="NC_004368.1"/>
</dbReference>
<dbReference type="SMR" id="Q8E5X0"/>
<dbReference type="KEGG" id="san:gbs0859"/>
<dbReference type="eggNOG" id="COG2145">
    <property type="taxonomic scope" value="Bacteria"/>
</dbReference>
<dbReference type="HOGENOM" id="CLU_019943_0_2_9"/>
<dbReference type="UniPathway" id="UPA00060">
    <property type="reaction ID" value="UER00139"/>
</dbReference>
<dbReference type="Proteomes" id="UP000000823">
    <property type="component" value="Chromosome"/>
</dbReference>
<dbReference type="GO" id="GO:0005524">
    <property type="term" value="F:ATP binding"/>
    <property type="evidence" value="ECO:0007669"/>
    <property type="project" value="UniProtKB-UniRule"/>
</dbReference>
<dbReference type="GO" id="GO:0004417">
    <property type="term" value="F:hydroxyethylthiazole kinase activity"/>
    <property type="evidence" value="ECO:0007669"/>
    <property type="project" value="UniProtKB-UniRule"/>
</dbReference>
<dbReference type="GO" id="GO:0000287">
    <property type="term" value="F:magnesium ion binding"/>
    <property type="evidence" value="ECO:0007669"/>
    <property type="project" value="UniProtKB-UniRule"/>
</dbReference>
<dbReference type="GO" id="GO:0009228">
    <property type="term" value="P:thiamine biosynthetic process"/>
    <property type="evidence" value="ECO:0007669"/>
    <property type="project" value="UniProtKB-KW"/>
</dbReference>
<dbReference type="GO" id="GO:0009229">
    <property type="term" value="P:thiamine diphosphate biosynthetic process"/>
    <property type="evidence" value="ECO:0007669"/>
    <property type="project" value="UniProtKB-UniRule"/>
</dbReference>
<dbReference type="CDD" id="cd01170">
    <property type="entry name" value="THZ_kinase"/>
    <property type="match status" value="1"/>
</dbReference>
<dbReference type="Gene3D" id="3.40.1190.20">
    <property type="match status" value="1"/>
</dbReference>
<dbReference type="HAMAP" id="MF_00228">
    <property type="entry name" value="Thz_kinase"/>
    <property type="match status" value="1"/>
</dbReference>
<dbReference type="InterPro" id="IPR000417">
    <property type="entry name" value="Hyethyz_kinase"/>
</dbReference>
<dbReference type="InterPro" id="IPR029056">
    <property type="entry name" value="Ribokinase-like"/>
</dbReference>
<dbReference type="NCBIfam" id="NF006830">
    <property type="entry name" value="PRK09355.1"/>
    <property type="match status" value="1"/>
</dbReference>
<dbReference type="NCBIfam" id="TIGR00694">
    <property type="entry name" value="thiM"/>
    <property type="match status" value="1"/>
</dbReference>
<dbReference type="Pfam" id="PF02110">
    <property type="entry name" value="HK"/>
    <property type="match status" value="1"/>
</dbReference>
<dbReference type="PIRSF" id="PIRSF000513">
    <property type="entry name" value="Thz_kinase"/>
    <property type="match status" value="1"/>
</dbReference>
<dbReference type="PRINTS" id="PR01099">
    <property type="entry name" value="HYETHTZKNASE"/>
</dbReference>
<dbReference type="SUPFAM" id="SSF53613">
    <property type="entry name" value="Ribokinase-like"/>
    <property type="match status" value="1"/>
</dbReference>
<sequence length="256" mass="27015">MYLEQLKEVNPLTICITNNVVKNFTANGLLALGASPAMSECIEDLEDLLKVANALLINIGTLTKESWQLYQEAIKIANKNQVPVVLDPVAAGASRFRLEVSLDLLKNYSISLLRGNGSEIAALVGEKQASKGADGGKVADLESIAVKANQVFDVPVVVTGETDAIAVRGEVRLLQNGSPLMPLVTGTGCLLGAVLAAFIGSSDRSDDLACLTEAMTVYNVSGEIAEKVAKGKGVGSFQVAFLDALSQMKSEMIMDK</sequence>
<organism>
    <name type="scientific">Streptococcus agalactiae serotype III (strain NEM316)</name>
    <dbReference type="NCBI Taxonomy" id="211110"/>
    <lineage>
        <taxon>Bacteria</taxon>
        <taxon>Bacillati</taxon>
        <taxon>Bacillota</taxon>
        <taxon>Bacilli</taxon>
        <taxon>Lactobacillales</taxon>
        <taxon>Streptococcaceae</taxon>
        <taxon>Streptococcus</taxon>
    </lineage>
</organism>
<reference key="1">
    <citation type="journal article" date="2002" name="Mol. Microbiol.">
        <title>Genome sequence of Streptococcus agalactiae, a pathogen causing invasive neonatal disease.</title>
        <authorList>
            <person name="Glaser P."/>
            <person name="Rusniok C."/>
            <person name="Buchrieser C."/>
            <person name="Chevalier F."/>
            <person name="Frangeul L."/>
            <person name="Msadek T."/>
            <person name="Zouine M."/>
            <person name="Couve E."/>
            <person name="Lalioui L."/>
            <person name="Poyart C."/>
            <person name="Trieu-Cuot P."/>
            <person name="Kunst F."/>
        </authorList>
    </citation>
    <scope>NUCLEOTIDE SEQUENCE [LARGE SCALE GENOMIC DNA]</scope>
    <source>
        <strain>NEM316</strain>
    </source>
</reference>